<dbReference type="EC" id="3.5.1.5" evidence="1"/>
<dbReference type="EMBL" id="AE005174">
    <property type="protein sequence ID" value="AAG55289.1"/>
    <property type="molecule type" value="Genomic_DNA"/>
</dbReference>
<dbReference type="EMBL" id="AE005174">
    <property type="protein sequence ID" value="AAG55698.1"/>
    <property type="molecule type" value="Genomic_DNA"/>
</dbReference>
<dbReference type="EMBL" id="BA000007">
    <property type="protein sequence ID" value="BAB34746.1"/>
    <property type="molecule type" value="Genomic_DNA"/>
</dbReference>
<dbReference type="PIR" id="C90794">
    <property type="entry name" value="C90794"/>
</dbReference>
<dbReference type="PIR" id="E85603">
    <property type="entry name" value="E85603"/>
</dbReference>
<dbReference type="RefSeq" id="WP_000612150.1">
    <property type="nucleotide sequence ID" value="NZ_VOAI01000029.1"/>
</dbReference>
<dbReference type="SMR" id="Q8XAG1"/>
<dbReference type="STRING" id="155864.Z1144"/>
<dbReference type="KEGG" id="ece:Z1144"/>
<dbReference type="KEGG" id="ece:Z1583"/>
<dbReference type="KEGG" id="ecs:ECs_1323"/>
<dbReference type="PATRIC" id="fig|386585.9.peg.1428"/>
<dbReference type="eggNOG" id="COG0832">
    <property type="taxonomic scope" value="Bacteria"/>
</dbReference>
<dbReference type="HOGENOM" id="CLU_129707_1_1_6"/>
<dbReference type="OMA" id="FYEVNDA"/>
<dbReference type="UniPathway" id="UPA00258">
    <property type="reaction ID" value="UER00370"/>
</dbReference>
<dbReference type="Proteomes" id="UP000000558">
    <property type="component" value="Chromosome"/>
</dbReference>
<dbReference type="Proteomes" id="UP000002519">
    <property type="component" value="Chromosome"/>
</dbReference>
<dbReference type="GO" id="GO:0035550">
    <property type="term" value="C:urease complex"/>
    <property type="evidence" value="ECO:0007669"/>
    <property type="project" value="InterPro"/>
</dbReference>
<dbReference type="GO" id="GO:0009039">
    <property type="term" value="F:urease activity"/>
    <property type="evidence" value="ECO:0007669"/>
    <property type="project" value="UniProtKB-UniRule"/>
</dbReference>
<dbReference type="GO" id="GO:0043419">
    <property type="term" value="P:urea catabolic process"/>
    <property type="evidence" value="ECO:0007669"/>
    <property type="project" value="UniProtKB-UniRule"/>
</dbReference>
<dbReference type="CDD" id="cd00407">
    <property type="entry name" value="Urease_beta"/>
    <property type="match status" value="1"/>
</dbReference>
<dbReference type="FunFam" id="2.10.150.10:FF:000001">
    <property type="entry name" value="Urease subunit beta"/>
    <property type="match status" value="1"/>
</dbReference>
<dbReference type="Gene3D" id="2.10.150.10">
    <property type="entry name" value="Urease, beta subunit"/>
    <property type="match status" value="1"/>
</dbReference>
<dbReference type="HAMAP" id="MF_01954">
    <property type="entry name" value="Urease_beta"/>
    <property type="match status" value="1"/>
</dbReference>
<dbReference type="InterPro" id="IPR002019">
    <property type="entry name" value="Urease_beta-like"/>
</dbReference>
<dbReference type="InterPro" id="IPR036461">
    <property type="entry name" value="Urease_betasu_sf"/>
</dbReference>
<dbReference type="InterPro" id="IPR050069">
    <property type="entry name" value="Urease_subunit"/>
</dbReference>
<dbReference type="NCBIfam" id="NF009682">
    <property type="entry name" value="PRK13203.1"/>
    <property type="match status" value="1"/>
</dbReference>
<dbReference type="NCBIfam" id="TIGR00192">
    <property type="entry name" value="urease_beta"/>
    <property type="match status" value="1"/>
</dbReference>
<dbReference type="PANTHER" id="PTHR33569">
    <property type="entry name" value="UREASE"/>
    <property type="match status" value="1"/>
</dbReference>
<dbReference type="PANTHER" id="PTHR33569:SF1">
    <property type="entry name" value="UREASE"/>
    <property type="match status" value="1"/>
</dbReference>
<dbReference type="Pfam" id="PF00699">
    <property type="entry name" value="Urease_beta"/>
    <property type="match status" value="1"/>
</dbReference>
<dbReference type="SUPFAM" id="SSF51278">
    <property type="entry name" value="Urease, beta-subunit"/>
    <property type="match status" value="1"/>
</dbReference>
<reference key="1">
    <citation type="journal article" date="2001" name="Nature">
        <title>Genome sequence of enterohaemorrhagic Escherichia coli O157:H7.</title>
        <authorList>
            <person name="Perna N.T."/>
            <person name="Plunkett G. III"/>
            <person name="Burland V."/>
            <person name="Mau B."/>
            <person name="Glasner J.D."/>
            <person name="Rose D.J."/>
            <person name="Mayhew G.F."/>
            <person name="Evans P.S."/>
            <person name="Gregor J."/>
            <person name="Kirkpatrick H.A."/>
            <person name="Posfai G."/>
            <person name="Hackett J."/>
            <person name="Klink S."/>
            <person name="Boutin A."/>
            <person name="Shao Y."/>
            <person name="Miller L."/>
            <person name="Grotbeck E.J."/>
            <person name="Davis N.W."/>
            <person name="Lim A."/>
            <person name="Dimalanta E.T."/>
            <person name="Potamousis K."/>
            <person name="Apodaca J."/>
            <person name="Anantharaman T.S."/>
            <person name="Lin J."/>
            <person name="Yen G."/>
            <person name="Schwartz D.C."/>
            <person name="Welch R.A."/>
            <person name="Blattner F.R."/>
        </authorList>
    </citation>
    <scope>NUCLEOTIDE SEQUENCE [LARGE SCALE GENOMIC DNA]</scope>
    <source>
        <strain>O157:H7 / EDL933 / ATCC 700927 / EHEC</strain>
    </source>
</reference>
<reference key="2">
    <citation type="journal article" date="2001" name="DNA Res.">
        <title>Complete genome sequence of enterohemorrhagic Escherichia coli O157:H7 and genomic comparison with a laboratory strain K-12.</title>
        <authorList>
            <person name="Hayashi T."/>
            <person name="Makino K."/>
            <person name="Ohnishi M."/>
            <person name="Kurokawa K."/>
            <person name="Ishii K."/>
            <person name="Yokoyama K."/>
            <person name="Han C.-G."/>
            <person name="Ohtsubo E."/>
            <person name="Nakayama K."/>
            <person name="Murata T."/>
            <person name="Tanaka M."/>
            <person name="Tobe T."/>
            <person name="Iida T."/>
            <person name="Takami H."/>
            <person name="Honda T."/>
            <person name="Sasakawa C."/>
            <person name="Ogasawara N."/>
            <person name="Yasunaga T."/>
            <person name="Kuhara S."/>
            <person name="Shiba T."/>
            <person name="Hattori M."/>
            <person name="Shinagawa H."/>
        </authorList>
    </citation>
    <scope>NUCLEOTIDE SEQUENCE [LARGE SCALE GENOMIC DNA]</scope>
    <source>
        <strain>O157:H7 / Sakai / RIMD 0509952 / EHEC</strain>
    </source>
</reference>
<reference key="3">
    <citation type="journal article" date="2004" name="Microbiology">
        <title>Urease activity of enterohaemorrhagic Escherichia coli depends on a specific one-base substitution in ureD.</title>
        <authorList>
            <person name="Nakano M."/>
            <person name="Iida T."/>
            <person name="Honda T."/>
        </authorList>
    </citation>
    <scope>ABSENCE OF UREASE</scope>
    <source>
        <strain>O157:H7 / Sakai / RIMD 0509952 / EHEC</strain>
    </source>
</reference>
<proteinExistence type="inferred from homology"/>
<gene>
    <name evidence="1" type="primary">ureB1</name>
    <name type="ordered locus">Z1144</name>
    <name type="ordered locus">ECs1323</name>
</gene>
<gene>
    <name evidence="1" type="primary">ureB2</name>
    <name type="ordered locus">Z1583</name>
</gene>
<keyword id="KW-0963">Cytoplasm</keyword>
<keyword id="KW-0378">Hydrolase</keyword>
<keyword id="KW-1185">Reference proteome</keyword>
<sequence length="106" mass="11761">MIPGEYKVKPGYIELNIGRATCSIIVENHGDRPIQVGSHYHFAEVNPALKFDRQKARGYRLNIAAGTAVRFEPGQKREVELVALSGARIVHGFRGDIMGELEANDE</sequence>
<evidence type="ECO:0000255" key="1">
    <source>
        <dbReference type="HAMAP-Rule" id="MF_01954"/>
    </source>
</evidence>
<evidence type="ECO:0000305" key="2"/>
<organism>
    <name type="scientific">Escherichia coli O157:H7</name>
    <dbReference type="NCBI Taxonomy" id="83334"/>
    <lineage>
        <taxon>Bacteria</taxon>
        <taxon>Pseudomonadati</taxon>
        <taxon>Pseudomonadota</taxon>
        <taxon>Gammaproteobacteria</taxon>
        <taxon>Enterobacterales</taxon>
        <taxon>Enterobacteriaceae</taxon>
        <taxon>Escherichia</taxon>
    </lineage>
</organism>
<accession>Q8XAG1</accession>
<accession>Q7AFH6</accession>
<name>URE2_ECO57</name>
<protein>
    <recommendedName>
        <fullName evidence="1">Urease subunit beta</fullName>
        <ecNumber evidence="1">3.5.1.5</ecNumber>
    </recommendedName>
    <alternativeName>
        <fullName evidence="1">Urea amidohydrolase subunit beta</fullName>
    </alternativeName>
</protein>
<comment type="catalytic activity">
    <reaction evidence="1">
        <text>urea + 2 H2O + H(+) = hydrogencarbonate + 2 NH4(+)</text>
        <dbReference type="Rhea" id="RHEA:20557"/>
        <dbReference type="ChEBI" id="CHEBI:15377"/>
        <dbReference type="ChEBI" id="CHEBI:15378"/>
        <dbReference type="ChEBI" id="CHEBI:16199"/>
        <dbReference type="ChEBI" id="CHEBI:17544"/>
        <dbReference type="ChEBI" id="CHEBI:28938"/>
        <dbReference type="EC" id="3.5.1.5"/>
    </reaction>
</comment>
<comment type="pathway">
    <text evidence="1">Nitrogen metabolism; urea degradation; CO(2) and NH(3) from urea (urease route): step 1/1.</text>
</comment>
<comment type="subunit">
    <text evidence="1">Heterotrimer of UreA (gamma), UreB (beta) and UreC (alpha) subunits. Three heterotrimers associate to form the active enzyme.</text>
</comment>
<comment type="subcellular location">
    <subcellularLocation>
        <location evidence="1">Cytoplasm</location>
    </subcellularLocation>
</comment>
<comment type="similarity">
    <text evidence="1">Belongs to the urease beta subunit family.</text>
</comment>
<comment type="caution">
    <text evidence="2">Neither O157 strain expresses urease due to a truncation of ureD, the last gene of the probable operon. Urease activity is restored in O157 / Sakai upon complementation with wild-type ureD.</text>
</comment>
<comment type="caution">
    <text evidence="2">This region of the chromosome is duplicated in strain O157:H7 / EDL933 but not in O157:H7 / Sakai.</text>
</comment>
<feature type="chain" id="PRO_0000234248" description="Urease subunit beta">
    <location>
        <begin position="1"/>
        <end position="106"/>
    </location>
</feature>